<sequence>MIHAISAVNRHLYEDVLEQHFRLRHDIFVEERHWETLRRPDGREVDSYDDEDTVYLLALEGRRVVGGHRLYPTTKPSMMSEVFPHLAAVRGCPSDPLIWEWSRYFVVRDRRDGALNLQLMAAVQEFCLDQGIAQVSAIMETWWLPRFHEAGFVVTPLGLPALVENAWTMAATVDIRRQTLDVLHDRIGMPSIVQQDGPRLDAVARANLCGLAAAQRKSA</sequence>
<name>BJAI_BRADU</name>
<evidence type="ECO:0000255" key="1">
    <source>
        <dbReference type="PROSITE-ProRule" id="PRU00533"/>
    </source>
</evidence>
<evidence type="ECO:0000269" key="2">
    <source>
    </source>
</evidence>
<evidence type="ECO:0000305" key="3"/>
<organism>
    <name type="scientific">Bradyrhizobium diazoefficiens (strain JCM 10833 / BCRC 13528 / IAM 13628 / NBRC 14792 / USDA 110)</name>
    <dbReference type="NCBI Taxonomy" id="224911"/>
    <lineage>
        <taxon>Bacteria</taxon>
        <taxon>Pseudomonadati</taxon>
        <taxon>Pseudomonadota</taxon>
        <taxon>Alphaproteobacteria</taxon>
        <taxon>Hyphomicrobiales</taxon>
        <taxon>Nitrobacteraceae</taxon>
        <taxon>Bradyrhizobium</taxon>
    </lineage>
</organism>
<gene>
    <name type="primary">bjaI</name>
    <name type="ordered locus">blr1063</name>
</gene>
<proteinExistence type="evidence at protein level"/>
<protein>
    <recommendedName>
        <fullName>Isovaleryl-homoserine lactone synthase</fullName>
        <shortName>IV-HSL synthase</shortName>
        <ecNumber>2.3.1.228</ecNumber>
    </recommendedName>
    <alternativeName>
        <fullName>Autoinducer synthesis protein BjaI</fullName>
    </alternativeName>
</protein>
<feature type="chain" id="PRO_0000422390" description="Isovaleryl-homoserine lactone synthase">
    <location>
        <begin position="1"/>
        <end position="219"/>
    </location>
</feature>
<comment type="function">
    <text evidence="2">Catalyzes the synthesis of IV-HSL (isovaleryl-homoserine lactone), a quorum-sensing (QS) autoinducer molecule which binds to BjaR1 transcriptional regulator to activate expression of QS-dependent genes. Is active with isovaleryl-CoA but cannot use isovaleryl-ACP as acyl donor.</text>
</comment>
<comment type="catalytic activity">
    <reaction evidence="2">
        <text>3-methylbutanoyl-CoA + S-adenosyl-L-methionine = N-isovaleryl-L-homoserine lactone + S-methyl-5'-thioadenosine + CoA + H(+)</text>
        <dbReference type="Rhea" id="RHEA:37471"/>
        <dbReference type="ChEBI" id="CHEBI:15378"/>
        <dbReference type="ChEBI" id="CHEBI:17509"/>
        <dbReference type="ChEBI" id="CHEBI:57287"/>
        <dbReference type="ChEBI" id="CHEBI:57345"/>
        <dbReference type="ChEBI" id="CHEBI:59789"/>
        <dbReference type="ChEBI" id="CHEBI:74958"/>
        <dbReference type="EC" id="2.3.1.228"/>
    </reaction>
</comment>
<comment type="induction">
    <text evidence="2">By IV-HSL via the transcriptional regulator BjaR1.</text>
</comment>
<comment type="disruption phenotype">
    <text evidence="2">Cells lacking this gene fail to produce IV-HSL.</text>
</comment>
<comment type="similarity">
    <text evidence="1">Belongs to the autoinducer synthase family.</text>
</comment>
<comment type="sequence caution" evidence="3">
    <conflict type="erroneous initiation">
        <sequence resource="EMBL-CDS" id="BAC46328"/>
    </conflict>
    <text>Extended N-terminus.</text>
</comment>
<accession>Q89VI2</accession>
<reference key="1">
    <citation type="journal article" date="2002" name="DNA Res.">
        <title>Complete genomic sequence of nitrogen-fixing symbiotic bacterium Bradyrhizobium japonicum USDA110.</title>
        <authorList>
            <person name="Kaneko T."/>
            <person name="Nakamura Y."/>
            <person name="Sato S."/>
            <person name="Minamisawa K."/>
            <person name="Uchiumi T."/>
            <person name="Sasamoto S."/>
            <person name="Watanabe A."/>
            <person name="Idesawa K."/>
            <person name="Iriguchi M."/>
            <person name="Kawashima K."/>
            <person name="Kohara M."/>
            <person name="Matsumoto M."/>
            <person name="Shimpo S."/>
            <person name="Tsuruoka H."/>
            <person name="Wada T."/>
            <person name="Yamada M."/>
            <person name="Tabata S."/>
        </authorList>
    </citation>
    <scope>NUCLEOTIDE SEQUENCE [LARGE SCALE GENOMIC DNA]</scope>
    <source>
        <strain>JCM 10833 / BCRC 13528 / IAM 13628 / NBRC 14792 / USDA 110</strain>
    </source>
</reference>
<reference key="2">
    <citation type="journal article" date="2011" name="Proc. Natl. Acad. Sci. U.S.A.">
        <title>Isovaleryl-homoserine lactone, an unusual branched-chain quorum-sensing signal from the soybean symbiont Bradyrhizobium japonicum.</title>
        <authorList>
            <person name="Lindemann A."/>
            <person name="Pessi G."/>
            <person name="Schaefer A.L."/>
            <person name="Mattmann M.E."/>
            <person name="Christensen Q.H."/>
            <person name="Kessler A."/>
            <person name="Hennecke H."/>
            <person name="Blackwell H.E."/>
            <person name="Greenberg E.P."/>
            <person name="Harwood C.S."/>
        </authorList>
    </citation>
    <scope>FUNCTION</scope>
    <scope>CATALYTIC ACTIVITY</scope>
    <scope>SUBSTRATE SPECIFICITY</scope>
    <scope>GENE NAME</scope>
    <scope>INDUCTION</scope>
    <scope>DISRUPTION PHENOTYPE</scope>
    <source>
        <strain>JCM 10833 / BCRC 13528 / IAM 13628 / NBRC 14792 / USDA 110</strain>
    </source>
</reference>
<dbReference type="EC" id="2.3.1.228"/>
<dbReference type="EMBL" id="BA000040">
    <property type="protein sequence ID" value="BAC46328.1"/>
    <property type="status" value="ALT_INIT"/>
    <property type="molecule type" value="Genomic_DNA"/>
</dbReference>
<dbReference type="RefSeq" id="NP_767703.1">
    <property type="nucleotide sequence ID" value="NC_004463.1"/>
</dbReference>
<dbReference type="RefSeq" id="WP_028172715.1">
    <property type="nucleotide sequence ID" value="NC_004463.1"/>
</dbReference>
<dbReference type="SMR" id="Q89VI2"/>
<dbReference type="STRING" id="224911.AAV28_02165"/>
<dbReference type="EnsemblBacteria" id="BAC46328">
    <property type="protein sequence ID" value="BAC46328"/>
    <property type="gene ID" value="BAC46328"/>
</dbReference>
<dbReference type="GeneID" id="46488332"/>
<dbReference type="KEGG" id="bja:blr1063"/>
<dbReference type="PATRIC" id="fig|224911.44.peg.458"/>
<dbReference type="eggNOG" id="COG3916">
    <property type="taxonomic scope" value="Bacteria"/>
</dbReference>
<dbReference type="HOGENOM" id="CLU_085711_3_0_5"/>
<dbReference type="InParanoid" id="Q89VI2"/>
<dbReference type="OrthoDB" id="6169313at2"/>
<dbReference type="BRENDA" id="2.3.1.228">
    <property type="organism ID" value="14426"/>
</dbReference>
<dbReference type="Proteomes" id="UP000002526">
    <property type="component" value="Chromosome"/>
</dbReference>
<dbReference type="GO" id="GO:0016747">
    <property type="term" value="F:acyltransferase activity, transferring groups other than amino-acyl groups"/>
    <property type="evidence" value="ECO:0007669"/>
    <property type="project" value="InterPro"/>
</dbReference>
<dbReference type="GO" id="GO:0009372">
    <property type="term" value="P:quorum sensing"/>
    <property type="evidence" value="ECO:0007669"/>
    <property type="project" value="UniProtKB-KW"/>
</dbReference>
<dbReference type="GO" id="GO:0007165">
    <property type="term" value="P:signal transduction"/>
    <property type="evidence" value="ECO:0000318"/>
    <property type="project" value="GO_Central"/>
</dbReference>
<dbReference type="FunFam" id="3.40.630.30:FF:000324">
    <property type="entry name" value="Autoinducer synthase"/>
    <property type="match status" value="1"/>
</dbReference>
<dbReference type="Gene3D" id="3.40.630.30">
    <property type="match status" value="1"/>
</dbReference>
<dbReference type="InterPro" id="IPR016181">
    <property type="entry name" value="Acyl_CoA_acyltransferase"/>
</dbReference>
<dbReference type="InterPro" id="IPR001690">
    <property type="entry name" value="Autoind_synthase"/>
</dbReference>
<dbReference type="InterPro" id="IPR000182">
    <property type="entry name" value="GNAT_dom"/>
</dbReference>
<dbReference type="PANTHER" id="PTHR39322">
    <property type="entry name" value="ACYL-HOMOSERINE-LACTONE SYNTHASE"/>
    <property type="match status" value="1"/>
</dbReference>
<dbReference type="PANTHER" id="PTHR39322:SF1">
    <property type="entry name" value="ISOVALERYL-HOMOSERINE LACTONE SYNTHASE"/>
    <property type="match status" value="1"/>
</dbReference>
<dbReference type="Pfam" id="PF00765">
    <property type="entry name" value="Autoind_synth"/>
    <property type="match status" value="1"/>
</dbReference>
<dbReference type="PRINTS" id="PR01549">
    <property type="entry name" value="AUTOINDCRSYN"/>
</dbReference>
<dbReference type="SUPFAM" id="SSF55729">
    <property type="entry name" value="Acyl-CoA N-acyltransferases (Nat)"/>
    <property type="match status" value="1"/>
</dbReference>
<dbReference type="PROSITE" id="PS51187">
    <property type="entry name" value="AUTOINDUCER_SYNTH_2"/>
    <property type="match status" value="1"/>
</dbReference>
<keyword id="KW-0071">Autoinducer synthesis</keyword>
<keyword id="KW-0673">Quorum sensing</keyword>
<keyword id="KW-1185">Reference proteome</keyword>
<keyword id="KW-0949">S-adenosyl-L-methionine</keyword>
<keyword id="KW-0808">Transferase</keyword>